<keyword id="KW-0031">Aminopeptidase</keyword>
<keyword id="KW-0963">Cytoplasm</keyword>
<keyword id="KW-0378">Hydrolase</keyword>
<keyword id="KW-0464">Manganese</keyword>
<keyword id="KW-0479">Metal-binding</keyword>
<keyword id="KW-0645">Protease</keyword>
<keyword id="KW-1185">Reference proteome</keyword>
<organism>
    <name type="scientific">Agrobacterium fabrum (strain C58 / ATCC 33970)</name>
    <name type="common">Agrobacterium tumefaciens (strain C58)</name>
    <dbReference type="NCBI Taxonomy" id="176299"/>
    <lineage>
        <taxon>Bacteria</taxon>
        <taxon>Pseudomonadati</taxon>
        <taxon>Pseudomonadota</taxon>
        <taxon>Alphaproteobacteria</taxon>
        <taxon>Hyphomicrobiales</taxon>
        <taxon>Rhizobiaceae</taxon>
        <taxon>Rhizobium/Agrobacterium group</taxon>
        <taxon>Agrobacterium</taxon>
        <taxon>Agrobacterium tumefaciens complex</taxon>
    </lineage>
</organism>
<reference key="1">
    <citation type="journal article" date="2001" name="Science">
        <title>The genome of the natural genetic engineer Agrobacterium tumefaciens C58.</title>
        <authorList>
            <person name="Wood D.W."/>
            <person name="Setubal J.C."/>
            <person name="Kaul R."/>
            <person name="Monks D.E."/>
            <person name="Kitajima J.P."/>
            <person name="Okura V.K."/>
            <person name="Zhou Y."/>
            <person name="Chen L."/>
            <person name="Wood G.E."/>
            <person name="Almeida N.F. Jr."/>
            <person name="Woo L."/>
            <person name="Chen Y."/>
            <person name="Paulsen I.T."/>
            <person name="Eisen J.A."/>
            <person name="Karp P.D."/>
            <person name="Bovee D. Sr."/>
            <person name="Chapman P."/>
            <person name="Clendenning J."/>
            <person name="Deatherage G."/>
            <person name="Gillet W."/>
            <person name="Grant C."/>
            <person name="Kutyavin T."/>
            <person name="Levy R."/>
            <person name="Li M.-J."/>
            <person name="McClelland E."/>
            <person name="Palmieri A."/>
            <person name="Raymond C."/>
            <person name="Rouse G."/>
            <person name="Saenphimmachak C."/>
            <person name="Wu Z."/>
            <person name="Romero P."/>
            <person name="Gordon D."/>
            <person name="Zhang S."/>
            <person name="Yoo H."/>
            <person name="Tao Y."/>
            <person name="Biddle P."/>
            <person name="Jung M."/>
            <person name="Krespan W."/>
            <person name="Perry M."/>
            <person name="Gordon-Kamm B."/>
            <person name="Liao L."/>
            <person name="Kim S."/>
            <person name="Hendrick C."/>
            <person name="Zhao Z.-Y."/>
            <person name="Dolan M."/>
            <person name="Chumley F."/>
            <person name="Tingey S.V."/>
            <person name="Tomb J.-F."/>
            <person name="Gordon M.P."/>
            <person name="Olson M.V."/>
            <person name="Nester E.W."/>
        </authorList>
    </citation>
    <scope>NUCLEOTIDE SEQUENCE [LARGE SCALE GENOMIC DNA]</scope>
    <source>
        <strain>C58 / ATCC 33970</strain>
    </source>
</reference>
<reference key="2">
    <citation type="journal article" date="2001" name="Science">
        <title>Genome sequence of the plant pathogen and biotechnology agent Agrobacterium tumefaciens C58.</title>
        <authorList>
            <person name="Goodner B."/>
            <person name="Hinkle G."/>
            <person name="Gattung S."/>
            <person name="Miller N."/>
            <person name="Blanchard M."/>
            <person name="Qurollo B."/>
            <person name="Goldman B.S."/>
            <person name="Cao Y."/>
            <person name="Askenazi M."/>
            <person name="Halling C."/>
            <person name="Mullin L."/>
            <person name="Houmiel K."/>
            <person name="Gordon J."/>
            <person name="Vaudin M."/>
            <person name="Iartchouk O."/>
            <person name="Epp A."/>
            <person name="Liu F."/>
            <person name="Wollam C."/>
            <person name="Allinger M."/>
            <person name="Doughty D."/>
            <person name="Scott C."/>
            <person name="Lappas C."/>
            <person name="Markelz B."/>
            <person name="Flanagan C."/>
            <person name="Crowell C."/>
            <person name="Gurson J."/>
            <person name="Lomo C."/>
            <person name="Sear C."/>
            <person name="Strub G."/>
            <person name="Cielo C."/>
            <person name="Slater S."/>
        </authorList>
    </citation>
    <scope>NUCLEOTIDE SEQUENCE [LARGE SCALE GENOMIC DNA]</scope>
    <source>
        <strain>C58 / ATCC 33970</strain>
    </source>
</reference>
<evidence type="ECO:0000255" key="1">
    <source>
        <dbReference type="HAMAP-Rule" id="MF_00181"/>
    </source>
</evidence>
<comment type="function">
    <text evidence="1">Presumably involved in the processing and regular turnover of intracellular proteins. Catalyzes the removal of unsubstituted N-terminal amino acids from various peptides.</text>
</comment>
<comment type="catalytic activity">
    <reaction evidence="1">
        <text>Release of an N-terminal amino acid, Xaa-|-Yaa-, in which Xaa is preferably Leu, but may be other amino acids including Pro although not Arg or Lys, and Yaa may be Pro. Amino acid amides and methyl esters are also readily hydrolyzed, but rates on arylamides are exceedingly low.</text>
        <dbReference type="EC" id="3.4.11.1"/>
    </reaction>
</comment>
<comment type="catalytic activity">
    <reaction evidence="1">
        <text>Release of an N-terminal amino acid, preferentially leucine, but not glutamic or aspartic acids.</text>
        <dbReference type="EC" id="3.4.11.10"/>
    </reaction>
</comment>
<comment type="cofactor">
    <cofactor evidence="1">
        <name>Mn(2+)</name>
        <dbReference type="ChEBI" id="CHEBI:29035"/>
    </cofactor>
    <text evidence="1">Binds 2 manganese ions per subunit.</text>
</comment>
<comment type="subcellular location">
    <subcellularLocation>
        <location evidence="1">Cytoplasm</location>
    </subcellularLocation>
</comment>
<comment type="similarity">
    <text evidence="1">Belongs to the peptidase M17 family.</text>
</comment>
<sequence>MSAKFDISFANSASLENALAIVLQASGEAQAVAGASEADPGGVIERASKISGFSAKSMATLDVIAPQGSSADRLLVIGLGKPSKLVAHDWLRAGGTAAAHFKKADKVVIYLDAPGVEVSAEAAADFALGLLLRAYSFDAYKTKKKSDDEKTPKKVDVTIVTAAHKDAEKASAVSEAIAGGVILARDLVNLPPNVLGPVEFAEKAEELRKLGVDVEILGEKELKKLGMNALLGVAQGSARPPRLAVMQWNGGSKKDEPIAFVGKGVVFDTGGISLKPGLGMEDMKGDMGGAAAVTGLMHVLAARKAKANVIGVIGLVENMPDGNAQRPGDIVTSMSGQTIEIINTDAEGRLVLADALWYTKDRFNPKFMINLATLTGAITVALGNLQAGLFSNDDELATRLAEAGEATAEKLWRMPLGKDYDKIIDSKFADMKNSSGRLAGSVTAAQFLKRFVGETPWAHLDIAGTAMGSPLTEINQSWGSGYGVRLLNELVRAHYED</sequence>
<name>AMPA_AGRFC</name>
<protein>
    <recommendedName>
        <fullName evidence="1">Probable cytosol aminopeptidase</fullName>
        <ecNumber evidence="1">3.4.11.1</ecNumber>
    </recommendedName>
    <alternativeName>
        <fullName evidence="1">Leucine aminopeptidase</fullName>
        <shortName evidence="1">LAP</shortName>
        <ecNumber evidence="1">3.4.11.10</ecNumber>
    </alternativeName>
    <alternativeName>
        <fullName evidence="1">Leucyl aminopeptidase</fullName>
    </alternativeName>
</protein>
<gene>
    <name evidence="1" type="primary">pepA</name>
    <name type="ordered locus">Atu1110</name>
    <name type="ORF">AGR_C_2055</name>
</gene>
<accession>Q8UGC8</accession>
<dbReference type="EC" id="3.4.11.1" evidence="1"/>
<dbReference type="EC" id="3.4.11.10" evidence="1"/>
<dbReference type="EMBL" id="AE007869">
    <property type="protein sequence ID" value="AAK86915.2"/>
    <property type="molecule type" value="Genomic_DNA"/>
</dbReference>
<dbReference type="PIR" id="AE2713">
    <property type="entry name" value="AE2713"/>
</dbReference>
<dbReference type="PIR" id="B97495">
    <property type="entry name" value="B97495"/>
</dbReference>
<dbReference type="RefSeq" id="NP_354130.2">
    <property type="nucleotide sequence ID" value="NC_003062.2"/>
</dbReference>
<dbReference type="RefSeq" id="WP_010971399.1">
    <property type="nucleotide sequence ID" value="NC_003062.2"/>
</dbReference>
<dbReference type="SMR" id="Q8UGC8"/>
<dbReference type="STRING" id="176299.Atu1110"/>
<dbReference type="EnsemblBacteria" id="AAK86915">
    <property type="protein sequence ID" value="AAK86915"/>
    <property type="gene ID" value="Atu1110"/>
</dbReference>
<dbReference type="GeneID" id="1133148"/>
<dbReference type="KEGG" id="atu:Atu1110"/>
<dbReference type="PATRIC" id="fig|176299.10.peg.1127"/>
<dbReference type="eggNOG" id="COG0260">
    <property type="taxonomic scope" value="Bacteria"/>
</dbReference>
<dbReference type="HOGENOM" id="CLU_013734_6_0_5"/>
<dbReference type="OrthoDB" id="9809354at2"/>
<dbReference type="PhylomeDB" id="Q8UGC8"/>
<dbReference type="BioCyc" id="AGRO:ATU1110-MONOMER"/>
<dbReference type="Proteomes" id="UP000000813">
    <property type="component" value="Chromosome circular"/>
</dbReference>
<dbReference type="GO" id="GO:0005737">
    <property type="term" value="C:cytoplasm"/>
    <property type="evidence" value="ECO:0007669"/>
    <property type="project" value="UniProtKB-SubCell"/>
</dbReference>
<dbReference type="GO" id="GO:0030145">
    <property type="term" value="F:manganese ion binding"/>
    <property type="evidence" value="ECO:0007669"/>
    <property type="project" value="UniProtKB-UniRule"/>
</dbReference>
<dbReference type="GO" id="GO:0070006">
    <property type="term" value="F:metalloaminopeptidase activity"/>
    <property type="evidence" value="ECO:0007669"/>
    <property type="project" value="InterPro"/>
</dbReference>
<dbReference type="GO" id="GO:0006508">
    <property type="term" value="P:proteolysis"/>
    <property type="evidence" value="ECO:0007669"/>
    <property type="project" value="UniProtKB-KW"/>
</dbReference>
<dbReference type="CDD" id="cd00433">
    <property type="entry name" value="Peptidase_M17"/>
    <property type="match status" value="1"/>
</dbReference>
<dbReference type="Gene3D" id="3.40.220.10">
    <property type="entry name" value="Leucine Aminopeptidase, subunit E, domain 1"/>
    <property type="match status" value="1"/>
</dbReference>
<dbReference type="Gene3D" id="3.40.630.10">
    <property type="entry name" value="Zn peptidases"/>
    <property type="match status" value="1"/>
</dbReference>
<dbReference type="HAMAP" id="MF_00181">
    <property type="entry name" value="Cytosol_peptidase_M17"/>
    <property type="match status" value="1"/>
</dbReference>
<dbReference type="InterPro" id="IPR011356">
    <property type="entry name" value="Leucine_aapep/pepB"/>
</dbReference>
<dbReference type="InterPro" id="IPR043472">
    <property type="entry name" value="Macro_dom-like"/>
</dbReference>
<dbReference type="InterPro" id="IPR000819">
    <property type="entry name" value="Peptidase_M17_C"/>
</dbReference>
<dbReference type="InterPro" id="IPR023042">
    <property type="entry name" value="Peptidase_M17_leu_NH2_pept"/>
</dbReference>
<dbReference type="InterPro" id="IPR008283">
    <property type="entry name" value="Peptidase_M17_N"/>
</dbReference>
<dbReference type="NCBIfam" id="NF002073">
    <property type="entry name" value="PRK00913.1-2"/>
    <property type="match status" value="1"/>
</dbReference>
<dbReference type="NCBIfam" id="NF002074">
    <property type="entry name" value="PRK00913.1-4"/>
    <property type="match status" value="1"/>
</dbReference>
<dbReference type="NCBIfam" id="NF002075">
    <property type="entry name" value="PRK00913.2-2"/>
    <property type="match status" value="1"/>
</dbReference>
<dbReference type="NCBIfam" id="NF002077">
    <property type="entry name" value="PRK00913.2-4"/>
    <property type="match status" value="1"/>
</dbReference>
<dbReference type="NCBIfam" id="NF002083">
    <property type="entry name" value="PRK00913.3-5"/>
    <property type="match status" value="1"/>
</dbReference>
<dbReference type="PANTHER" id="PTHR11963:SF23">
    <property type="entry name" value="CYTOSOL AMINOPEPTIDASE"/>
    <property type="match status" value="1"/>
</dbReference>
<dbReference type="PANTHER" id="PTHR11963">
    <property type="entry name" value="LEUCINE AMINOPEPTIDASE-RELATED"/>
    <property type="match status" value="1"/>
</dbReference>
<dbReference type="Pfam" id="PF00883">
    <property type="entry name" value="Peptidase_M17"/>
    <property type="match status" value="1"/>
</dbReference>
<dbReference type="Pfam" id="PF02789">
    <property type="entry name" value="Peptidase_M17_N"/>
    <property type="match status" value="1"/>
</dbReference>
<dbReference type="PRINTS" id="PR00481">
    <property type="entry name" value="LAMNOPPTDASE"/>
</dbReference>
<dbReference type="SUPFAM" id="SSF52949">
    <property type="entry name" value="Macro domain-like"/>
    <property type="match status" value="1"/>
</dbReference>
<dbReference type="SUPFAM" id="SSF53187">
    <property type="entry name" value="Zn-dependent exopeptidases"/>
    <property type="match status" value="1"/>
</dbReference>
<dbReference type="PROSITE" id="PS00631">
    <property type="entry name" value="CYTOSOL_AP"/>
    <property type="match status" value="1"/>
</dbReference>
<proteinExistence type="inferred from homology"/>
<feature type="chain" id="PRO_0000165715" description="Probable cytosol aminopeptidase">
    <location>
        <begin position="1"/>
        <end position="497"/>
    </location>
</feature>
<feature type="active site" evidence="1">
    <location>
        <position position="275"/>
    </location>
</feature>
<feature type="active site" evidence="1">
    <location>
        <position position="349"/>
    </location>
</feature>
<feature type="binding site" evidence="1">
    <location>
        <position position="263"/>
    </location>
    <ligand>
        <name>Mn(2+)</name>
        <dbReference type="ChEBI" id="CHEBI:29035"/>
        <label>2</label>
    </ligand>
</feature>
<feature type="binding site" evidence="1">
    <location>
        <position position="268"/>
    </location>
    <ligand>
        <name>Mn(2+)</name>
        <dbReference type="ChEBI" id="CHEBI:29035"/>
        <label>1</label>
    </ligand>
</feature>
<feature type="binding site" evidence="1">
    <location>
        <position position="268"/>
    </location>
    <ligand>
        <name>Mn(2+)</name>
        <dbReference type="ChEBI" id="CHEBI:29035"/>
        <label>2</label>
    </ligand>
</feature>
<feature type="binding site" evidence="1">
    <location>
        <position position="286"/>
    </location>
    <ligand>
        <name>Mn(2+)</name>
        <dbReference type="ChEBI" id="CHEBI:29035"/>
        <label>2</label>
    </ligand>
</feature>
<feature type="binding site" evidence="1">
    <location>
        <position position="345"/>
    </location>
    <ligand>
        <name>Mn(2+)</name>
        <dbReference type="ChEBI" id="CHEBI:29035"/>
        <label>1</label>
    </ligand>
</feature>
<feature type="binding site" evidence="1">
    <location>
        <position position="347"/>
    </location>
    <ligand>
        <name>Mn(2+)</name>
        <dbReference type="ChEBI" id="CHEBI:29035"/>
        <label>1</label>
    </ligand>
</feature>
<feature type="binding site" evidence="1">
    <location>
        <position position="347"/>
    </location>
    <ligand>
        <name>Mn(2+)</name>
        <dbReference type="ChEBI" id="CHEBI:29035"/>
        <label>2</label>
    </ligand>
</feature>